<gene>
    <name evidence="1" type="primary">rpsE</name>
    <name type="ordered locus">GDI3387</name>
    <name type="ordered locus">Gdia_2983</name>
</gene>
<name>RS5_GLUDA</name>
<dbReference type="EMBL" id="CP001189">
    <property type="protein sequence ID" value="ACI52713.1"/>
    <property type="molecule type" value="Genomic_DNA"/>
</dbReference>
<dbReference type="EMBL" id="AM889285">
    <property type="protein sequence ID" value="CAP57330.1"/>
    <property type="molecule type" value="Genomic_DNA"/>
</dbReference>
<dbReference type="RefSeq" id="WP_012227931.1">
    <property type="nucleotide sequence ID" value="NC_010125.1"/>
</dbReference>
<dbReference type="SMR" id="A9H3L2"/>
<dbReference type="STRING" id="272568.GDI3387"/>
<dbReference type="KEGG" id="gdi:GDI3387"/>
<dbReference type="KEGG" id="gdj:Gdia_2983"/>
<dbReference type="eggNOG" id="COG0098">
    <property type="taxonomic scope" value="Bacteria"/>
</dbReference>
<dbReference type="HOGENOM" id="CLU_065898_2_2_5"/>
<dbReference type="OrthoDB" id="9809045at2"/>
<dbReference type="Proteomes" id="UP000001176">
    <property type="component" value="Chromosome"/>
</dbReference>
<dbReference type="GO" id="GO:0015935">
    <property type="term" value="C:small ribosomal subunit"/>
    <property type="evidence" value="ECO:0007669"/>
    <property type="project" value="InterPro"/>
</dbReference>
<dbReference type="GO" id="GO:0019843">
    <property type="term" value="F:rRNA binding"/>
    <property type="evidence" value="ECO:0007669"/>
    <property type="project" value="UniProtKB-UniRule"/>
</dbReference>
<dbReference type="GO" id="GO:0003735">
    <property type="term" value="F:structural constituent of ribosome"/>
    <property type="evidence" value="ECO:0007669"/>
    <property type="project" value="InterPro"/>
</dbReference>
<dbReference type="GO" id="GO:0006412">
    <property type="term" value="P:translation"/>
    <property type="evidence" value="ECO:0007669"/>
    <property type="project" value="UniProtKB-UniRule"/>
</dbReference>
<dbReference type="FunFam" id="3.30.160.20:FF:000001">
    <property type="entry name" value="30S ribosomal protein S5"/>
    <property type="match status" value="1"/>
</dbReference>
<dbReference type="FunFam" id="3.30.230.10:FF:000002">
    <property type="entry name" value="30S ribosomal protein S5"/>
    <property type="match status" value="1"/>
</dbReference>
<dbReference type="Gene3D" id="3.30.160.20">
    <property type="match status" value="1"/>
</dbReference>
<dbReference type="Gene3D" id="3.30.230.10">
    <property type="match status" value="1"/>
</dbReference>
<dbReference type="HAMAP" id="MF_01307_B">
    <property type="entry name" value="Ribosomal_uS5_B"/>
    <property type="match status" value="1"/>
</dbReference>
<dbReference type="InterPro" id="IPR020568">
    <property type="entry name" value="Ribosomal_Su5_D2-typ_SF"/>
</dbReference>
<dbReference type="InterPro" id="IPR000851">
    <property type="entry name" value="Ribosomal_uS5"/>
</dbReference>
<dbReference type="InterPro" id="IPR005712">
    <property type="entry name" value="Ribosomal_uS5_bac-type"/>
</dbReference>
<dbReference type="InterPro" id="IPR005324">
    <property type="entry name" value="Ribosomal_uS5_C"/>
</dbReference>
<dbReference type="InterPro" id="IPR013810">
    <property type="entry name" value="Ribosomal_uS5_N"/>
</dbReference>
<dbReference type="InterPro" id="IPR018192">
    <property type="entry name" value="Ribosomal_uS5_N_CS"/>
</dbReference>
<dbReference type="InterPro" id="IPR014721">
    <property type="entry name" value="Ribsml_uS5_D2-typ_fold_subgr"/>
</dbReference>
<dbReference type="NCBIfam" id="TIGR01021">
    <property type="entry name" value="rpsE_bact"/>
    <property type="match status" value="1"/>
</dbReference>
<dbReference type="PANTHER" id="PTHR48277">
    <property type="entry name" value="MITOCHONDRIAL RIBOSOMAL PROTEIN S5"/>
    <property type="match status" value="1"/>
</dbReference>
<dbReference type="PANTHER" id="PTHR48277:SF1">
    <property type="entry name" value="MITOCHONDRIAL RIBOSOMAL PROTEIN S5"/>
    <property type="match status" value="1"/>
</dbReference>
<dbReference type="Pfam" id="PF00333">
    <property type="entry name" value="Ribosomal_S5"/>
    <property type="match status" value="1"/>
</dbReference>
<dbReference type="Pfam" id="PF03719">
    <property type="entry name" value="Ribosomal_S5_C"/>
    <property type="match status" value="1"/>
</dbReference>
<dbReference type="SUPFAM" id="SSF54768">
    <property type="entry name" value="dsRNA-binding domain-like"/>
    <property type="match status" value="1"/>
</dbReference>
<dbReference type="SUPFAM" id="SSF54211">
    <property type="entry name" value="Ribosomal protein S5 domain 2-like"/>
    <property type="match status" value="1"/>
</dbReference>
<dbReference type="PROSITE" id="PS00585">
    <property type="entry name" value="RIBOSOMAL_S5"/>
    <property type="match status" value="1"/>
</dbReference>
<dbReference type="PROSITE" id="PS50881">
    <property type="entry name" value="S5_DSRBD"/>
    <property type="match status" value="1"/>
</dbReference>
<organism>
    <name type="scientific">Gluconacetobacter diazotrophicus (strain ATCC 49037 / DSM 5601 / CCUG 37298 / CIP 103539 / LMG 7603 / PAl5)</name>
    <dbReference type="NCBI Taxonomy" id="272568"/>
    <lineage>
        <taxon>Bacteria</taxon>
        <taxon>Pseudomonadati</taxon>
        <taxon>Pseudomonadota</taxon>
        <taxon>Alphaproteobacteria</taxon>
        <taxon>Acetobacterales</taxon>
        <taxon>Acetobacteraceae</taxon>
        <taxon>Gluconacetobacter</taxon>
    </lineage>
</organism>
<proteinExistence type="inferred from homology"/>
<reference key="1">
    <citation type="journal article" date="2009" name="BMC Genomics">
        <title>Complete genome sequence of the sugarcane nitrogen-fixing endophyte Gluconacetobacter diazotrophicus Pal5.</title>
        <authorList>
            <person name="Bertalan M."/>
            <person name="Albano R."/>
            <person name="de Padua V."/>
            <person name="Rouws L."/>
            <person name="Rojas C."/>
            <person name="Hemerly A."/>
            <person name="Teixeira K."/>
            <person name="Schwab S."/>
            <person name="Araujo J."/>
            <person name="Oliveira A."/>
            <person name="Franca L."/>
            <person name="Magalhaes V."/>
            <person name="Alqueres S."/>
            <person name="Cardoso A."/>
            <person name="Almeida W."/>
            <person name="Loureiro M.M."/>
            <person name="Nogueira E."/>
            <person name="Cidade D."/>
            <person name="Oliveira D."/>
            <person name="Simao T."/>
            <person name="Macedo J."/>
            <person name="Valadao A."/>
            <person name="Dreschsel M."/>
            <person name="Freitas F."/>
            <person name="Vidal M."/>
            <person name="Guedes H."/>
            <person name="Rodrigues E."/>
            <person name="Meneses C."/>
            <person name="Brioso P."/>
            <person name="Pozzer L."/>
            <person name="Figueiredo D."/>
            <person name="Montano H."/>
            <person name="Junior J."/>
            <person name="de Souza Filho G."/>
            <person name="Martin Quintana Flores V."/>
            <person name="Ferreira B."/>
            <person name="Branco A."/>
            <person name="Gonzalez P."/>
            <person name="Guillobel H."/>
            <person name="Lemos M."/>
            <person name="Seibel L."/>
            <person name="Macedo J."/>
            <person name="Alves-Ferreira M."/>
            <person name="Sachetto-Martins G."/>
            <person name="Coelho A."/>
            <person name="Santos E."/>
            <person name="Amaral G."/>
            <person name="Neves A."/>
            <person name="Pacheco A.B."/>
            <person name="Carvalho D."/>
            <person name="Lery L."/>
            <person name="Bisch P."/>
            <person name="Rossle S.C."/>
            <person name="Urmenyi T."/>
            <person name="Rael Pereira A."/>
            <person name="Silva R."/>
            <person name="Rondinelli E."/>
            <person name="von Kruger W."/>
            <person name="Martins O."/>
            <person name="Baldani J.I."/>
            <person name="Ferreira P.C."/>
        </authorList>
    </citation>
    <scope>NUCLEOTIDE SEQUENCE [LARGE SCALE GENOMIC DNA]</scope>
    <source>
        <strain>ATCC 49037 / DSM 5601 / CCUG 37298 / CIP 103539 / LMG 7603 / PAl5</strain>
    </source>
</reference>
<reference key="2">
    <citation type="journal article" date="2010" name="Stand. Genomic Sci.">
        <title>Two genome sequences of the same bacterial strain, Gluconacetobacter diazotrophicus PAl 5, suggest a new standard in genome sequence submission.</title>
        <authorList>
            <person name="Giongo A."/>
            <person name="Tyler H.L."/>
            <person name="Zipperer U.N."/>
            <person name="Triplett E.W."/>
        </authorList>
    </citation>
    <scope>NUCLEOTIDE SEQUENCE [LARGE SCALE GENOMIC DNA]</scope>
    <source>
        <strain>ATCC 49037 / DSM 5601 / CCUG 37298 / CIP 103539 / LMG 7603 / PAl5</strain>
    </source>
</reference>
<evidence type="ECO:0000255" key="1">
    <source>
        <dbReference type="HAMAP-Rule" id="MF_01307"/>
    </source>
</evidence>
<evidence type="ECO:0000305" key="2"/>
<protein>
    <recommendedName>
        <fullName evidence="1">Small ribosomal subunit protein uS5</fullName>
    </recommendedName>
    <alternativeName>
        <fullName evidence="2">30S ribosomal protein S5</fullName>
    </alternativeName>
</protein>
<feature type="chain" id="PRO_1000140859" description="Small ribosomal subunit protein uS5">
    <location>
        <begin position="1"/>
        <end position="192"/>
    </location>
</feature>
<feature type="domain" description="S5 DRBM" evidence="1">
    <location>
        <begin position="22"/>
        <end position="85"/>
    </location>
</feature>
<sequence>MAREPREGGRGGRDREREGDDLVDKLVTINRVAKVVKGGRRFAFAALVVVGDQKGRVGYGAGKAREVPEAIRKATDRAKRAMIRVPMKEGRTLHHDVAGHFGAGKVVLRSADAGTGIIAGGPMRAVFESLGINDVVAKSLGTRNPHNMVKATFAALERCASPRTVANRRGKKVSDILGRRDVAGTGEAAADV</sequence>
<keyword id="KW-1185">Reference proteome</keyword>
<keyword id="KW-0687">Ribonucleoprotein</keyword>
<keyword id="KW-0689">Ribosomal protein</keyword>
<keyword id="KW-0694">RNA-binding</keyword>
<keyword id="KW-0699">rRNA-binding</keyword>
<comment type="function">
    <text evidence="1">With S4 and S12 plays an important role in translational accuracy.</text>
</comment>
<comment type="function">
    <text evidence="1">Located at the back of the 30S subunit body where it stabilizes the conformation of the head with respect to the body.</text>
</comment>
<comment type="subunit">
    <text evidence="1">Part of the 30S ribosomal subunit. Contacts proteins S4 and S8.</text>
</comment>
<comment type="domain">
    <text>The N-terminal domain interacts with the head of the 30S subunit; the C-terminal domain interacts with the body and contacts protein S4. The interaction surface between S4 and S5 is involved in control of translational fidelity.</text>
</comment>
<comment type="similarity">
    <text evidence="1">Belongs to the universal ribosomal protein uS5 family.</text>
</comment>
<accession>A9H3L2</accession>